<organism>
    <name type="scientific">Rotavirus B (isolate RVB/Human/China/ADRV/1982)</name>
    <name type="common">RV-B</name>
    <name type="synonym">Rotavirus B (isolate adult diarrhea rotavirus)</name>
    <dbReference type="NCBI Taxonomy" id="10942"/>
    <lineage>
        <taxon>Viruses</taxon>
        <taxon>Riboviria</taxon>
        <taxon>Orthornavirae</taxon>
        <taxon>Duplornaviricota</taxon>
        <taxon>Resentoviricetes</taxon>
        <taxon>Reovirales</taxon>
        <taxon>Sedoreoviridae</taxon>
        <taxon>Rotavirus</taxon>
        <taxon>Rotavirus B</taxon>
    </lineage>
</organism>
<protein>
    <recommendedName>
        <fullName evidence="1">Non-structural protein 5</fullName>
        <shortName evidence="1">NSP5</shortName>
    </recommendedName>
    <alternativeName>
        <fullName evidence="1">NS26</fullName>
    </alternativeName>
</protein>
<organismHost>
    <name type="scientific">Homo sapiens</name>
    <name type="common">Human</name>
    <dbReference type="NCBI Taxonomy" id="9606"/>
</organismHost>
<evidence type="ECO:0000255" key="1">
    <source>
        <dbReference type="HAMAP-Rule" id="MF_04092"/>
    </source>
</evidence>
<evidence type="ECO:0000256" key="2">
    <source>
        <dbReference type="SAM" id="MobiDB-lite"/>
    </source>
</evidence>
<sequence>MAEASEFNFTIKRKQRTMSDRRTREDTKQKKIEEKSDIDLVDSASVYSQESSRSNYSDAYDKLKREPMVEESNDAKYRNFEFSEDEEVHRPSSKASDKSYREMKRKHDDINTSDSILEKLSELNLEIEKIKQMNQPITIDAAFNMILRNVDNLTIRQKQALINAIVNSMN</sequence>
<dbReference type="EMBL" id="M34380">
    <property type="protein sequence ID" value="AAA42674.1"/>
    <property type="molecule type" value="Genomic_RNA"/>
</dbReference>
<dbReference type="SMR" id="P18571"/>
<dbReference type="GO" id="GO:0030430">
    <property type="term" value="C:host cell cytoplasm"/>
    <property type="evidence" value="ECO:0007669"/>
    <property type="project" value="UniProtKB-SubCell"/>
</dbReference>
<dbReference type="GO" id="GO:0016887">
    <property type="term" value="F:ATP hydrolysis activity"/>
    <property type="evidence" value="ECO:0007669"/>
    <property type="project" value="UniProtKB-UniRule"/>
</dbReference>
<dbReference type="GO" id="GO:0000287">
    <property type="term" value="F:magnesium ion binding"/>
    <property type="evidence" value="ECO:0007669"/>
    <property type="project" value="UniProtKB-UniRule"/>
</dbReference>
<dbReference type="GO" id="GO:0000166">
    <property type="term" value="F:nucleotide binding"/>
    <property type="evidence" value="ECO:0007669"/>
    <property type="project" value="UniProtKB-UniRule"/>
</dbReference>
<dbReference type="GO" id="GO:0003723">
    <property type="term" value="F:RNA binding"/>
    <property type="evidence" value="ECO:0007669"/>
    <property type="project" value="UniProtKB-UniRule"/>
</dbReference>
<dbReference type="GO" id="GO:0019079">
    <property type="term" value="P:viral genome replication"/>
    <property type="evidence" value="ECO:0007669"/>
    <property type="project" value="UniProtKB-UniRule"/>
</dbReference>
<dbReference type="HAMAP" id="MF_04092">
    <property type="entry name" value="ROTA_NSP5"/>
    <property type="match status" value="1"/>
</dbReference>
<dbReference type="InterPro" id="IPR002512">
    <property type="entry name" value="Rotavirus_A/C_NSP5"/>
</dbReference>
<dbReference type="InterPro" id="IPR020244">
    <property type="entry name" value="Rotavirus_B_NSP5"/>
</dbReference>
<dbReference type="Pfam" id="PF17580">
    <property type="entry name" value="GBR_NSP5"/>
    <property type="match status" value="1"/>
</dbReference>
<proteinExistence type="inferred from homology"/>
<name>NSP5_ROTGA</name>
<accession>P18571</accession>
<feature type="chain" id="PRO_0000149629" description="Non-structural protein 5">
    <location>
        <begin position="1"/>
        <end position="170"/>
    </location>
</feature>
<feature type="region of interest" description="Disordered" evidence="2">
    <location>
        <begin position="1"/>
        <end position="67"/>
    </location>
</feature>
<feature type="region of interest" description="Disordered" evidence="2">
    <location>
        <begin position="83"/>
        <end position="106"/>
    </location>
</feature>
<feature type="compositionally biased region" description="Basic and acidic residues" evidence="2">
    <location>
        <begin position="17"/>
        <end position="38"/>
    </location>
</feature>
<feature type="compositionally biased region" description="Polar residues" evidence="2">
    <location>
        <begin position="45"/>
        <end position="57"/>
    </location>
</feature>
<reference key="1">
    <citation type="journal article" date="1990" name="Virology">
        <title>cDNA cloning of each genomic segment of the group B rotavirus ADRV: molecular characterization of the 11th RNA segment.</title>
        <authorList>
            <person name="Chen G.-M."/>
            <person name="Hung T."/>
            <person name="Mackow E.R."/>
        </authorList>
    </citation>
    <scope>NUCLEOTIDE SEQUENCE [GENOMIC RNA]</scope>
</reference>
<comment type="function">
    <text evidence="1">Plays an essential role in the viral genome replication. Participates, together with NSP2, in the formation of viral factories (viroplasms) which are large inclusions in the host cytoplasm where replication intermediates are assembled and viral RNA replication takes place. Orchestrates the recruitment of viroplasmic proteins such as capsid proteins to these factories.</text>
</comment>
<comment type="subunit">
    <text evidence="1">Homodimer. Interacts with VP1. Interacts with VP2. Interacts with NSP2 and NSP6.</text>
</comment>
<comment type="subcellular location">
    <subcellularLocation>
        <location evidence="1">Host cytoplasm</location>
    </subcellularLocation>
    <text evidence="1">Found in spherical cytoplasmic structures, called virus factories, that appear early after infection and are the site of viral replication and packaging.</text>
</comment>
<comment type="PTM">
    <text evidence="1">O-glycosylated.</text>
</comment>
<comment type="similarity">
    <text evidence="1">Belongs to the rotavirus NSP5 family.</text>
</comment>
<keyword id="KW-0325">Glycoprotein</keyword>
<keyword id="KW-1035">Host cytoplasm</keyword>
<keyword id="KW-0547">Nucleotide-binding</keyword>
<keyword id="KW-0694">RNA-binding</keyword>